<dbReference type="EMBL" id="AB028968">
    <property type="protein sequence ID" value="BAA82997.1"/>
    <property type="status" value="ALT_INIT"/>
    <property type="molecule type" value="mRNA"/>
</dbReference>
<dbReference type="EMBL" id="AK294342">
    <property type="protein sequence ID" value="BAH11739.1"/>
    <property type="molecule type" value="mRNA"/>
</dbReference>
<dbReference type="EMBL" id="AL355377">
    <property type="status" value="NOT_ANNOTATED_CDS"/>
    <property type="molecule type" value="Genomic_DNA"/>
</dbReference>
<dbReference type="EMBL" id="CH471071">
    <property type="protein sequence ID" value="EAW58408.1"/>
    <property type="molecule type" value="Genomic_DNA"/>
</dbReference>
<dbReference type="EMBL" id="AY956807">
    <property type="protein sequence ID" value="AAX51885.1"/>
    <property type="molecule type" value="mRNA"/>
</dbReference>
<dbReference type="EMBL" id="AY956808">
    <property type="protein sequence ID" value="AAX51886.1"/>
    <property type="molecule type" value="mRNA"/>
</dbReference>
<dbReference type="CCDS" id="CCDS43796.1"/>
<dbReference type="RefSeq" id="NP_001291262.1">
    <property type="nucleotide sequence ID" value="NM_001304333.3"/>
</dbReference>
<dbReference type="RefSeq" id="NP_056112.1">
    <property type="nucleotide sequence ID" value="NM_015297.3"/>
</dbReference>
<dbReference type="PDB" id="1WIL">
    <property type="method" value="NMR"/>
    <property type="chains" value="A=123-198"/>
</dbReference>
<dbReference type="PDB" id="5XHT">
    <property type="method" value="NMR"/>
    <property type="chains" value="A=131-190"/>
</dbReference>
<dbReference type="PDBsum" id="1WIL"/>
<dbReference type="PDBsum" id="5XHT"/>
<dbReference type="BMRB" id="Q9UPV7"/>
<dbReference type="SMR" id="Q9UPV7"/>
<dbReference type="BioGRID" id="116931">
    <property type="interactions" value="7"/>
</dbReference>
<dbReference type="FunCoup" id="Q9UPV7">
    <property type="interactions" value="1366"/>
</dbReference>
<dbReference type="IntAct" id="Q9UPV7">
    <property type="interactions" value="6"/>
</dbReference>
<dbReference type="STRING" id="9606.ENSP00000242315"/>
<dbReference type="iPTMnet" id="Q9UPV7"/>
<dbReference type="PhosphoSitePlus" id="Q9UPV7"/>
<dbReference type="SwissPalm" id="Q9UPV7"/>
<dbReference type="BioMuta" id="PHF24"/>
<dbReference type="DMDM" id="73621116"/>
<dbReference type="jPOST" id="Q9UPV7"/>
<dbReference type="MassIVE" id="Q9UPV7"/>
<dbReference type="PaxDb" id="9606-ENSP00000242315"/>
<dbReference type="PeptideAtlas" id="Q9UPV7"/>
<dbReference type="ProteomicsDB" id="85455"/>
<dbReference type="Antibodypedia" id="5591">
    <property type="antibodies" value="20 antibodies from 11 providers"/>
</dbReference>
<dbReference type="DNASU" id="23349"/>
<dbReference type="Ensembl" id="ENST00000242315.4">
    <property type="protein sequence ID" value="ENSP00000242315.3"/>
    <property type="gene ID" value="ENSG00000122733.12"/>
</dbReference>
<dbReference type="GeneID" id="23349"/>
<dbReference type="KEGG" id="hsa:23349"/>
<dbReference type="MANE-Select" id="ENST00000242315.4">
    <property type="protein sequence ID" value="ENSP00000242315.3"/>
    <property type="RefSeq nucleotide sequence ID" value="NM_015297.3"/>
    <property type="RefSeq protein sequence ID" value="NP_056112.1"/>
</dbReference>
<dbReference type="UCSC" id="uc003zvr.4">
    <property type="organism name" value="human"/>
</dbReference>
<dbReference type="AGR" id="HGNC:29180"/>
<dbReference type="CTD" id="23349"/>
<dbReference type="DisGeNET" id="23349"/>
<dbReference type="GeneCards" id="PHF24"/>
<dbReference type="HGNC" id="HGNC:29180">
    <property type="gene designation" value="PHF24"/>
</dbReference>
<dbReference type="HPA" id="ENSG00000122733">
    <property type="expression patterns" value="Group enriched (brain, testis)"/>
</dbReference>
<dbReference type="MIM" id="619928">
    <property type="type" value="gene"/>
</dbReference>
<dbReference type="neXtProt" id="NX_Q9UPV7"/>
<dbReference type="OpenTargets" id="ENSG00000122733"/>
<dbReference type="PharmGKB" id="PA134993280"/>
<dbReference type="VEuPathDB" id="HostDB:ENSG00000122733"/>
<dbReference type="eggNOG" id="ENOG502QT6N">
    <property type="taxonomic scope" value="Eukaryota"/>
</dbReference>
<dbReference type="GeneTree" id="ENSGT00390000002865"/>
<dbReference type="HOGENOM" id="CLU_057701_1_0_1"/>
<dbReference type="InParanoid" id="Q9UPV7"/>
<dbReference type="OMA" id="KGHIEWQ"/>
<dbReference type="OrthoDB" id="9978298at2759"/>
<dbReference type="PAN-GO" id="Q9UPV7">
    <property type="GO annotations" value="0 GO annotations based on evolutionary models"/>
</dbReference>
<dbReference type="PhylomeDB" id="Q9UPV7"/>
<dbReference type="TreeFam" id="TF333336"/>
<dbReference type="PathwayCommons" id="Q9UPV7"/>
<dbReference type="SignaLink" id="Q9UPV7"/>
<dbReference type="BioGRID-ORCS" id="23349">
    <property type="hits" value="9 hits in 1146 CRISPR screens"/>
</dbReference>
<dbReference type="CD-CODE" id="FB4E32DD">
    <property type="entry name" value="Presynaptic clusters and postsynaptic densities"/>
</dbReference>
<dbReference type="ChiTaRS" id="PHF24">
    <property type="organism name" value="human"/>
</dbReference>
<dbReference type="EvolutionaryTrace" id="Q9UPV7"/>
<dbReference type="GenomeRNAi" id="23349"/>
<dbReference type="Pharos" id="Q9UPV7">
    <property type="development level" value="Tdark"/>
</dbReference>
<dbReference type="PRO" id="PR:Q9UPV7"/>
<dbReference type="Proteomes" id="UP000005640">
    <property type="component" value="Chromosome 9"/>
</dbReference>
<dbReference type="RNAct" id="Q9UPV7">
    <property type="molecule type" value="protein"/>
</dbReference>
<dbReference type="Bgee" id="ENSG00000122733">
    <property type="expression patterns" value="Expressed in prefrontal cortex and 166 other cell types or tissues"/>
</dbReference>
<dbReference type="GO" id="GO:0005737">
    <property type="term" value="C:cytoplasm"/>
    <property type="evidence" value="ECO:0000318"/>
    <property type="project" value="GO_Central"/>
</dbReference>
<dbReference type="GO" id="GO:0098978">
    <property type="term" value="C:glutamatergic synapse"/>
    <property type="evidence" value="ECO:0007669"/>
    <property type="project" value="Ensembl"/>
</dbReference>
<dbReference type="GO" id="GO:0005634">
    <property type="term" value="C:nucleus"/>
    <property type="evidence" value="ECO:0000318"/>
    <property type="project" value="GO_Central"/>
</dbReference>
<dbReference type="GO" id="GO:0030672">
    <property type="term" value="C:synaptic vesicle membrane"/>
    <property type="evidence" value="ECO:0007669"/>
    <property type="project" value="Ensembl"/>
</dbReference>
<dbReference type="GO" id="GO:0003714">
    <property type="term" value="F:transcription corepressor activity"/>
    <property type="evidence" value="ECO:0000318"/>
    <property type="project" value="GO_Central"/>
</dbReference>
<dbReference type="GO" id="GO:0008270">
    <property type="term" value="F:zinc ion binding"/>
    <property type="evidence" value="ECO:0007669"/>
    <property type="project" value="UniProtKB-KW"/>
</dbReference>
<dbReference type="GO" id="GO:0050966">
    <property type="term" value="P:detection of mechanical stimulus involved in sensory perception of pain"/>
    <property type="evidence" value="ECO:0007669"/>
    <property type="project" value="Ensembl"/>
</dbReference>
<dbReference type="GO" id="GO:0007214">
    <property type="term" value="P:gamma-aminobutyric acid signaling pathway"/>
    <property type="evidence" value="ECO:0007669"/>
    <property type="project" value="Ensembl"/>
</dbReference>
<dbReference type="GO" id="GO:0008277">
    <property type="term" value="P:regulation of G protein-coupled receptor signaling pathway"/>
    <property type="evidence" value="ECO:0007669"/>
    <property type="project" value="Ensembl"/>
</dbReference>
<dbReference type="GO" id="GO:0032228">
    <property type="term" value="P:regulation of synaptic transmission, GABAergic"/>
    <property type="evidence" value="ECO:0007669"/>
    <property type="project" value="Ensembl"/>
</dbReference>
<dbReference type="FunFam" id="3.30.40.10:FF:000525">
    <property type="entry name" value="PHD finger protein 24"/>
    <property type="match status" value="1"/>
</dbReference>
<dbReference type="Gene3D" id="3.30.40.10">
    <property type="entry name" value="Zinc/RING finger domain, C3HC4 (zinc finger)"/>
    <property type="match status" value="1"/>
</dbReference>
<dbReference type="IDEAL" id="IID00741"/>
<dbReference type="InterPro" id="IPR011992">
    <property type="entry name" value="EF-hand-dom_pair"/>
</dbReference>
<dbReference type="InterPro" id="IPR031946">
    <property type="entry name" value="KIAA1045_Zf_RING"/>
</dbReference>
<dbReference type="InterPro" id="IPR019786">
    <property type="entry name" value="Zinc_finger_PHD-type_CS"/>
</dbReference>
<dbReference type="InterPro" id="IPR011011">
    <property type="entry name" value="Znf_FYVE_PHD"/>
</dbReference>
<dbReference type="InterPro" id="IPR013083">
    <property type="entry name" value="Znf_RING/FYVE/PHD"/>
</dbReference>
<dbReference type="PANTHER" id="PTHR46453:SF4">
    <property type="entry name" value="PHD FINGER PROTEIN 24"/>
    <property type="match status" value="1"/>
</dbReference>
<dbReference type="PANTHER" id="PTHR46453">
    <property type="entry name" value="PROTEIN KINASE C-BINDING PROTEIN 1"/>
    <property type="match status" value="1"/>
</dbReference>
<dbReference type="Pfam" id="PF16744">
    <property type="entry name" value="zf-RING_15"/>
    <property type="match status" value="1"/>
</dbReference>
<dbReference type="SUPFAM" id="SSF47473">
    <property type="entry name" value="EF-hand"/>
    <property type="match status" value="1"/>
</dbReference>
<dbReference type="SUPFAM" id="SSF57903">
    <property type="entry name" value="FYVE/PHD zinc finger"/>
    <property type="match status" value="1"/>
</dbReference>
<dbReference type="PROSITE" id="PS01359">
    <property type="entry name" value="ZF_PHD_1"/>
    <property type="match status" value="1"/>
</dbReference>
<comment type="interaction">
    <interactant intactId="EBI-17717171">
        <id>Q9UPV7</id>
    </interactant>
    <interactant intactId="EBI-357563">
        <id>P08754</id>
        <label>GNAI3</label>
    </interactant>
    <organismsDiffer>false</organismsDiffer>
    <experiments>3</experiments>
</comment>
<comment type="interaction">
    <interactant intactId="EBI-17717171">
        <id>Q9UPV7</id>
    </interactant>
    <interactant intactId="EBI-357275">
        <id>Q99471</id>
        <label>PFDN5</label>
    </interactant>
    <organismsDiffer>false</organismsDiffer>
    <experiments>3</experiments>
</comment>
<comment type="interaction">
    <interactant intactId="EBI-17717171">
        <id>Q9UPV7</id>
    </interactant>
    <interactant intactId="EBI-941422">
        <id>P07204</id>
        <label>THBD</label>
    </interactant>
    <organismsDiffer>false</organismsDiffer>
    <experiments>3</experiments>
</comment>
<comment type="interaction">
    <interactant intactId="EBI-17717171">
        <id>Q9UPV7</id>
    </interactant>
    <interactant intactId="EBI-17716262">
        <id>Q9UPQ4-2</id>
        <label>TRIM35</label>
    </interactant>
    <organismsDiffer>false</organismsDiffer>
    <experiments>3</experiments>
</comment>
<comment type="interaction">
    <interactant intactId="EBI-17717171">
        <id>Q9UPV7</id>
    </interactant>
    <interactant intactId="EBI-2555731">
        <id>Q9H707</id>
        <label>ZNF552</label>
    </interactant>
    <organismsDiffer>false</organismsDiffer>
    <experiments>3</experiments>
</comment>
<comment type="sequence caution" evidence="4">
    <conflict type="erroneous initiation">
        <sequence resource="EMBL-CDS" id="BAA82997"/>
    </conflict>
</comment>
<accession>Q9UPV7</accession>
<accession>B7Z253</accession>
<accession>Q58FE9</accession>
<accession>Q5T662</accession>
<protein>
    <recommendedName>
        <fullName evidence="5">PHD finger protein 24</fullName>
    </recommendedName>
</protein>
<feature type="initiator methionine" description="Removed">
    <location>
        <position position="1"/>
    </location>
</feature>
<feature type="chain" id="PRO_0000059331" description="PHD finger protein 24">
    <location>
        <begin position="2"/>
        <end position="400"/>
    </location>
</feature>
<feature type="zinc finger region" description="PHD-type">
    <location>
        <begin position="129"/>
        <end position="190"/>
    </location>
</feature>
<feature type="region of interest" description="Disordered" evidence="2">
    <location>
        <begin position="28"/>
        <end position="99"/>
    </location>
</feature>
<feature type="compositionally biased region" description="Basic and acidic residues" evidence="2">
    <location>
        <begin position="28"/>
        <end position="38"/>
    </location>
</feature>
<feature type="compositionally biased region" description="Basic and acidic residues" evidence="2">
    <location>
        <begin position="78"/>
        <end position="97"/>
    </location>
</feature>
<feature type="modified residue" description="Omega-N-methylarginine" evidence="1">
    <location>
        <position position="36"/>
    </location>
</feature>
<feature type="modified residue" description="Phosphoserine" evidence="6">
    <location>
        <position position="43"/>
    </location>
</feature>
<feature type="modified residue" description="Phosphothreonine" evidence="1">
    <location>
        <position position="47"/>
    </location>
</feature>
<feature type="modified residue" description="Phosphoserine" evidence="1">
    <location>
        <position position="51"/>
    </location>
</feature>
<feature type="lipid moiety-binding region" description="N-myristoyl glycine" evidence="3">
    <location>
        <position position="2"/>
    </location>
</feature>
<feature type="turn" evidence="7">
    <location>
        <begin position="134"/>
        <end position="136"/>
    </location>
</feature>
<feature type="strand" evidence="7">
    <location>
        <begin position="148"/>
        <end position="152"/>
    </location>
</feature>
<feature type="helix" evidence="7">
    <location>
        <begin position="156"/>
        <end position="162"/>
    </location>
</feature>
<feature type="strand" evidence="7">
    <location>
        <begin position="178"/>
        <end position="182"/>
    </location>
</feature>
<feature type="turn" evidence="7">
    <location>
        <begin position="186"/>
        <end position="188"/>
    </location>
</feature>
<feature type="strand" evidence="7">
    <location>
        <begin position="193"/>
        <end position="195"/>
    </location>
</feature>
<organism>
    <name type="scientific">Homo sapiens</name>
    <name type="common">Human</name>
    <dbReference type="NCBI Taxonomy" id="9606"/>
    <lineage>
        <taxon>Eukaryota</taxon>
        <taxon>Metazoa</taxon>
        <taxon>Chordata</taxon>
        <taxon>Craniata</taxon>
        <taxon>Vertebrata</taxon>
        <taxon>Euteleostomi</taxon>
        <taxon>Mammalia</taxon>
        <taxon>Eutheria</taxon>
        <taxon>Euarchontoglires</taxon>
        <taxon>Primates</taxon>
        <taxon>Haplorrhini</taxon>
        <taxon>Catarrhini</taxon>
        <taxon>Hominidae</taxon>
        <taxon>Homo</taxon>
    </lineage>
</organism>
<name>PHF24_HUMAN</name>
<sequence>MGVLMSKRQTVEQVQKVSLAVSAFKDGLRDRPSIRRTGELPGSRRGTVEGSVQEVQEEKEAEAGTSVVQEESSAGRAAWERLRDGRGVEPEEFDRTSRFTPPAFIRPTRKLDDDKPPEICLEPREPVVNDEMCDVCEVWTAESLFPCRVCTRVFHDGCLRRMGYIQGDSAAEVTEMAHTETGWSCHYCDNINLLLTEEEMYSLTETFQRCKVIPDCSLTLEDFLRYRHQAAKRGDRDRALSEEQEEQAARQFAALDPEHRGHIEWPDFLSHESLLLLQQLRPQNSLLRLLTVKERERARAAFLARGSGSTVSEAECRRAQHSWFCKRFPEAPSCSVSISHVGPIADSSPASSSSKSQDKTLLPTEQESRFVDWPTFLQENVLYILAARPNSAAIHLKPPG</sequence>
<keyword id="KW-0002">3D-structure</keyword>
<keyword id="KW-0449">Lipoprotein</keyword>
<keyword id="KW-0479">Metal-binding</keyword>
<keyword id="KW-0488">Methylation</keyword>
<keyword id="KW-0519">Myristate</keyword>
<keyword id="KW-0597">Phosphoprotein</keyword>
<keyword id="KW-1267">Proteomics identification</keyword>
<keyword id="KW-1185">Reference proteome</keyword>
<keyword id="KW-0862">Zinc</keyword>
<keyword id="KW-0863">Zinc-finger</keyword>
<reference key="1">
    <citation type="journal article" date="1999" name="DNA Res.">
        <title>Prediction of the coding sequences of unidentified human genes. XIV. The complete sequences of 100 new cDNA clones from brain which code for large proteins in vitro.</title>
        <authorList>
            <person name="Kikuno R."/>
            <person name="Nagase T."/>
            <person name="Ishikawa K."/>
            <person name="Hirosawa M."/>
            <person name="Miyajima N."/>
            <person name="Tanaka A."/>
            <person name="Kotani H."/>
            <person name="Nomura N."/>
            <person name="Ohara O."/>
        </authorList>
    </citation>
    <scope>NUCLEOTIDE SEQUENCE [LARGE SCALE MRNA]</scope>
    <source>
        <tissue>Brain</tissue>
    </source>
</reference>
<reference key="2">
    <citation type="journal article" date="2004" name="Nat. Genet.">
        <title>Complete sequencing and characterization of 21,243 full-length human cDNAs.</title>
        <authorList>
            <person name="Ota T."/>
            <person name="Suzuki Y."/>
            <person name="Nishikawa T."/>
            <person name="Otsuki T."/>
            <person name="Sugiyama T."/>
            <person name="Irie R."/>
            <person name="Wakamatsu A."/>
            <person name="Hayashi K."/>
            <person name="Sato H."/>
            <person name="Nagai K."/>
            <person name="Kimura K."/>
            <person name="Makita H."/>
            <person name="Sekine M."/>
            <person name="Obayashi M."/>
            <person name="Nishi T."/>
            <person name="Shibahara T."/>
            <person name="Tanaka T."/>
            <person name="Ishii S."/>
            <person name="Yamamoto J."/>
            <person name="Saito K."/>
            <person name="Kawai Y."/>
            <person name="Isono Y."/>
            <person name="Nakamura Y."/>
            <person name="Nagahari K."/>
            <person name="Murakami K."/>
            <person name="Yasuda T."/>
            <person name="Iwayanagi T."/>
            <person name="Wagatsuma M."/>
            <person name="Shiratori A."/>
            <person name="Sudo H."/>
            <person name="Hosoiri T."/>
            <person name="Kaku Y."/>
            <person name="Kodaira H."/>
            <person name="Kondo H."/>
            <person name="Sugawara M."/>
            <person name="Takahashi M."/>
            <person name="Kanda K."/>
            <person name="Yokoi T."/>
            <person name="Furuya T."/>
            <person name="Kikkawa E."/>
            <person name="Omura Y."/>
            <person name="Abe K."/>
            <person name="Kamihara K."/>
            <person name="Katsuta N."/>
            <person name="Sato K."/>
            <person name="Tanikawa M."/>
            <person name="Yamazaki M."/>
            <person name="Ninomiya K."/>
            <person name="Ishibashi T."/>
            <person name="Yamashita H."/>
            <person name="Murakawa K."/>
            <person name="Fujimori K."/>
            <person name="Tanai H."/>
            <person name="Kimata M."/>
            <person name="Watanabe M."/>
            <person name="Hiraoka S."/>
            <person name="Chiba Y."/>
            <person name="Ishida S."/>
            <person name="Ono Y."/>
            <person name="Takiguchi S."/>
            <person name="Watanabe S."/>
            <person name="Yosida M."/>
            <person name="Hotuta T."/>
            <person name="Kusano J."/>
            <person name="Kanehori K."/>
            <person name="Takahashi-Fujii A."/>
            <person name="Hara H."/>
            <person name="Tanase T.-O."/>
            <person name="Nomura Y."/>
            <person name="Togiya S."/>
            <person name="Komai F."/>
            <person name="Hara R."/>
            <person name="Takeuchi K."/>
            <person name="Arita M."/>
            <person name="Imose N."/>
            <person name="Musashino K."/>
            <person name="Yuuki H."/>
            <person name="Oshima A."/>
            <person name="Sasaki N."/>
            <person name="Aotsuka S."/>
            <person name="Yoshikawa Y."/>
            <person name="Matsunawa H."/>
            <person name="Ichihara T."/>
            <person name="Shiohata N."/>
            <person name="Sano S."/>
            <person name="Moriya S."/>
            <person name="Momiyama H."/>
            <person name="Satoh N."/>
            <person name="Takami S."/>
            <person name="Terashima Y."/>
            <person name="Suzuki O."/>
            <person name="Nakagawa S."/>
            <person name="Senoh A."/>
            <person name="Mizoguchi H."/>
            <person name="Goto Y."/>
            <person name="Shimizu F."/>
            <person name="Wakebe H."/>
            <person name="Hishigaki H."/>
            <person name="Watanabe T."/>
            <person name="Sugiyama A."/>
            <person name="Takemoto M."/>
            <person name="Kawakami B."/>
            <person name="Yamazaki M."/>
            <person name="Watanabe K."/>
            <person name="Kumagai A."/>
            <person name="Itakura S."/>
            <person name="Fukuzumi Y."/>
            <person name="Fujimori Y."/>
            <person name="Komiyama M."/>
            <person name="Tashiro H."/>
            <person name="Tanigami A."/>
            <person name="Fujiwara T."/>
            <person name="Ono T."/>
            <person name="Yamada K."/>
            <person name="Fujii Y."/>
            <person name="Ozaki K."/>
            <person name="Hirao M."/>
            <person name="Ohmori Y."/>
            <person name="Kawabata A."/>
            <person name="Hikiji T."/>
            <person name="Kobatake N."/>
            <person name="Inagaki H."/>
            <person name="Ikema Y."/>
            <person name="Okamoto S."/>
            <person name="Okitani R."/>
            <person name="Kawakami T."/>
            <person name="Noguchi S."/>
            <person name="Itoh T."/>
            <person name="Shigeta K."/>
            <person name="Senba T."/>
            <person name="Matsumura K."/>
            <person name="Nakajima Y."/>
            <person name="Mizuno T."/>
            <person name="Morinaga M."/>
            <person name="Sasaki M."/>
            <person name="Togashi T."/>
            <person name="Oyama M."/>
            <person name="Hata H."/>
            <person name="Watanabe M."/>
            <person name="Komatsu T."/>
            <person name="Mizushima-Sugano J."/>
            <person name="Satoh T."/>
            <person name="Shirai Y."/>
            <person name="Takahashi Y."/>
            <person name="Nakagawa K."/>
            <person name="Okumura K."/>
            <person name="Nagase T."/>
            <person name="Nomura N."/>
            <person name="Kikuchi H."/>
            <person name="Masuho Y."/>
            <person name="Yamashita R."/>
            <person name="Nakai K."/>
            <person name="Yada T."/>
            <person name="Nakamura Y."/>
            <person name="Ohara O."/>
            <person name="Isogai T."/>
            <person name="Sugano S."/>
        </authorList>
    </citation>
    <scope>NUCLEOTIDE SEQUENCE [LARGE SCALE MRNA]</scope>
    <source>
        <tissue>Amygdala</tissue>
    </source>
</reference>
<reference key="3">
    <citation type="journal article" date="2004" name="Nature">
        <title>DNA sequence and analysis of human chromosome 9.</title>
        <authorList>
            <person name="Humphray S.J."/>
            <person name="Oliver K."/>
            <person name="Hunt A.R."/>
            <person name="Plumb R.W."/>
            <person name="Loveland J.E."/>
            <person name="Howe K.L."/>
            <person name="Andrews T.D."/>
            <person name="Searle S."/>
            <person name="Hunt S.E."/>
            <person name="Scott C.E."/>
            <person name="Jones M.C."/>
            <person name="Ainscough R."/>
            <person name="Almeida J.P."/>
            <person name="Ambrose K.D."/>
            <person name="Ashwell R.I.S."/>
            <person name="Babbage A.K."/>
            <person name="Babbage S."/>
            <person name="Bagguley C.L."/>
            <person name="Bailey J."/>
            <person name="Banerjee R."/>
            <person name="Barker D.J."/>
            <person name="Barlow K.F."/>
            <person name="Bates K."/>
            <person name="Beasley H."/>
            <person name="Beasley O."/>
            <person name="Bird C.P."/>
            <person name="Bray-Allen S."/>
            <person name="Brown A.J."/>
            <person name="Brown J.Y."/>
            <person name="Burford D."/>
            <person name="Burrill W."/>
            <person name="Burton J."/>
            <person name="Carder C."/>
            <person name="Carter N.P."/>
            <person name="Chapman J.C."/>
            <person name="Chen Y."/>
            <person name="Clarke G."/>
            <person name="Clark S.Y."/>
            <person name="Clee C.M."/>
            <person name="Clegg S."/>
            <person name="Collier R.E."/>
            <person name="Corby N."/>
            <person name="Crosier M."/>
            <person name="Cummings A.T."/>
            <person name="Davies J."/>
            <person name="Dhami P."/>
            <person name="Dunn M."/>
            <person name="Dutta I."/>
            <person name="Dyer L.W."/>
            <person name="Earthrowl M.E."/>
            <person name="Faulkner L."/>
            <person name="Fleming C.J."/>
            <person name="Frankish A."/>
            <person name="Frankland J.A."/>
            <person name="French L."/>
            <person name="Fricker D.G."/>
            <person name="Garner P."/>
            <person name="Garnett J."/>
            <person name="Ghori J."/>
            <person name="Gilbert J.G.R."/>
            <person name="Glison C."/>
            <person name="Grafham D.V."/>
            <person name="Gribble S."/>
            <person name="Griffiths C."/>
            <person name="Griffiths-Jones S."/>
            <person name="Grocock R."/>
            <person name="Guy J."/>
            <person name="Hall R.E."/>
            <person name="Hammond S."/>
            <person name="Harley J.L."/>
            <person name="Harrison E.S.I."/>
            <person name="Hart E.A."/>
            <person name="Heath P.D."/>
            <person name="Henderson C.D."/>
            <person name="Hopkins B.L."/>
            <person name="Howard P.J."/>
            <person name="Howden P.J."/>
            <person name="Huckle E."/>
            <person name="Johnson C."/>
            <person name="Johnson D."/>
            <person name="Joy A.A."/>
            <person name="Kay M."/>
            <person name="Keenan S."/>
            <person name="Kershaw J.K."/>
            <person name="Kimberley A.M."/>
            <person name="King A."/>
            <person name="Knights A."/>
            <person name="Laird G.K."/>
            <person name="Langford C."/>
            <person name="Lawlor S."/>
            <person name="Leongamornlert D.A."/>
            <person name="Leversha M."/>
            <person name="Lloyd C."/>
            <person name="Lloyd D.M."/>
            <person name="Lovell J."/>
            <person name="Martin S."/>
            <person name="Mashreghi-Mohammadi M."/>
            <person name="Matthews L."/>
            <person name="McLaren S."/>
            <person name="McLay K.E."/>
            <person name="McMurray A."/>
            <person name="Milne S."/>
            <person name="Nickerson T."/>
            <person name="Nisbett J."/>
            <person name="Nordsiek G."/>
            <person name="Pearce A.V."/>
            <person name="Peck A.I."/>
            <person name="Porter K.M."/>
            <person name="Pandian R."/>
            <person name="Pelan S."/>
            <person name="Phillimore B."/>
            <person name="Povey S."/>
            <person name="Ramsey Y."/>
            <person name="Rand V."/>
            <person name="Scharfe M."/>
            <person name="Sehra H.K."/>
            <person name="Shownkeen R."/>
            <person name="Sims S.K."/>
            <person name="Skuce C.D."/>
            <person name="Smith M."/>
            <person name="Steward C.A."/>
            <person name="Swarbreck D."/>
            <person name="Sycamore N."/>
            <person name="Tester J."/>
            <person name="Thorpe A."/>
            <person name="Tracey A."/>
            <person name="Tromans A."/>
            <person name="Thomas D.W."/>
            <person name="Wall M."/>
            <person name="Wallis J.M."/>
            <person name="West A.P."/>
            <person name="Whitehead S.L."/>
            <person name="Willey D.L."/>
            <person name="Williams S.A."/>
            <person name="Wilming L."/>
            <person name="Wray P.W."/>
            <person name="Young L."/>
            <person name="Ashurst J.L."/>
            <person name="Coulson A."/>
            <person name="Blocker H."/>
            <person name="Durbin R.M."/>
            <person name="Sulston J.E."/>
            <person name="Hubbard T."/>
            <person name="Jackson M.J."/>
            <person name="Bentley D.R."/>
            <person name="Beck S."/>
            <person name="Rogers J."/>
            <person name="Dunham I."/>
        </authorList>
    </citation>
    <scope>NUCLEOTIDE SEQUENCE [LARGE SCALE GENOMIC DNA]</scope>
</reference>
<reference key="4">
    <citation type="submission" date="2005-09" db="EMBL/GenBank/DDBJ databases">
        <authorList>
            <person name="Mural R.J."/>
            <person name="Istrail S."/>
            <person name="Sutton G.G."/>
            <person name="Florea L."/>
            <person name="Halpern A.L."/>
            <person name="Mobarry C.M."/>
            <person name="Lippert R."/>
            <person name="Walenz B."/>
            <person name="Shatkay H."/>
            <person name="Dew I."/>
            <person name="Miller J.R."/>
            <person name="Flanigan M.J."/>
            <person name="Edwards N.J."/>
            <person name="Bolanos R."/>
            <person name="Fasulo D."/>
            <person name="Halldorsson B.V."/>
            <person name="Hannenhalli S."/>
            <person name="Turner R."/>
            <person name="Yooseph S."/>
            <person name="Lu F."/>
            <person name="Nusskern D.R."/>
            <person name="Shue B.C."/>
            <person name="Zheng X.H."/>
            <person name="Zhong F."/>
            <person name="Delcher A.L."/>
            <person name="Huson D.H."/>
            <person name="Kravitz S.A."/>
            <person name="Mouchard L."/>
            <person name="Reinert K."/>
            <person name="Remington K.A."/>
            <person name="Clark A.G."/>
            <person name="Waterman M.S."/>
            <person name="Eichler E.E."/>
            <person name="Adams M.D."/>
            <person name="Hunkapiller M.W."/>
            <person name="Myers E.W."/>
            <person name="Venter J.C."/>
        </authorList>
    </citation>
    <scope>NUCLEOTIDE SEQUENCE [LARGE SCALE GENOMIC DNA]</scope>
</reference>
<reference key="5">
    <citation type="submission" date="2005-03" db="EMBL/GenBank/DDBJ databases">
        <title>Identification of candidate tumor suppressor genes in nasopharyngeal carcinoma using a combination of digital expression analysis, expression profiling and functional assay.</title>
        <authorList>
            <person name="Liu D.X."/>
            <person name="Low J.S.W."/>
            <person name="Cui Y."/>
            <person name="Hsieh W.-S."/>
            <person name="Tao Q."/>
        </authorList>
    </citation>
    <scope>NUCLEOTIDE SEQUENCE [MRNA] OF 1-74</scope>
    <source>
        <tissue>Brain</tissue>
    </source>
</reference>
<reference key="6">
    <citation type="journal article" date="2008" name="Proc. Natl. Acad. Sci. U.S.A.">
        <title>A quantitative atlas of mitotic phosphorylation.</title>
        <authorList>
            <person name="Dephoure N."/>
            <person name="Zhou C."/>
            <person name="Villen J."/>
            <person name="Beausoleil S.A."/>
            <person name="Bakalarski C.E."/>
            <person name="Elledge S.J."/>
            <person name="Gygi S.P."/>
        </authorList>
    </citation>
    <scope>PHOSPHORYLATION [LARGE SCALE ANALYSIS] AT SER-43</scope>
    <scope>IDENTIFICATION BY MASS SPECTROMETRY [LARGE SCALE ANALYSIS]</scope>
    <source>
        <tissue>Cervix carcinoma</tissue>
    </source>
</reference>
<reference key="7">
    <citation type="journal article" date="2010" name="Proteomics">
        <title>Strategy for comprehensive identification of human N-myristoylated proteins using an insect cell-free protein synthesis system.</title>
        <authorList>
            <person name="Suzuki T."/>
            <person name="Moriya K."/>
            <person name="Nagatoshi K."/>
            <person name="Ota Y."/>
            <person name="Ezure T."/>
            <person name="Ando E."/>
            <person name="Tsunasawa S."/>
            <person name="Utsumi T."/>
        </authorList>
    </citation>
    <scope>MYRISTOYLATION AT GLY-2</scope>
</reference>
<reference key="8">
    <citation type="submission" date="2004-11" db="PDB data bank">
        <title>Solution structure of the RING finger domain of the human KIAA1045 protein.</title>
        <authorList>
            <consortium name="RIKEN structural genomics initiative (RSGI)"/>
        </authorList>
    </citation>
    <scope>STRUCTURE BY NMR OF 123-198 IN COMPLEX WITH ZINC</scope>
</reference>
<proteinExistence type="evidence at protein level"/>
<gene>
    <name evidence="5" type="primary">PHF24</name>
    <name evidence="5" type="synonym">KIAA1045</name>
</gene>
<evidence type="ECO:0000250" key="1">
    <source>
        <dbReference type="UniProtKB" id="Q80TL4"/>
    </source>
</evidence>
<evidence type="ECO:0000256" key="2">
    <source>
        <dbReference type="SAM" id="MobiDB-lite"/>
    </source>
</evidence>
<evidence type="ECO:0000269" key="3">
    <source>
    </source>
</evidence>
<evidence type="ECO:0000305" key="4"/>
<evidence type="ECO:0000312" key="5">
    <source>
        <dbReference type="HGNC" id="HGNC:29180"/>
    </source>
</evidence>
<evidence type="ECO:0007744" key="6">
    <source>
    </source>
</evidence>
<evidence type="ECO:0007829" key="7">
    <source>
        <dbReference type="PDB" id="1WIL"/>
    </source>
</evidence>